<gene>
    <name type="primary">HSD3B</name>
</gene>
<name>3BHS_CANLF</name>
<sequence length="373" mass="42378">MAGWSCLVTGAGGFLGQRIVHLLAEEKELQEIRALDKAFRPELLEEFSKLQSKTKLTMVEGDILDEQCLKRACQGTSVVIHTASVIDVMNVIHRETIMNVNLKGTQLLLEACAQASVPIFIYTSTIEVAGPNSYRDIIQNAHEEEHLESTWSAPYPYSKKLAEKAVLAANGWALKNGGTLHTCALRPMYIYGEGSIFLYNYIYKALRNNGILTHHSKFSIVNPVYVGNVAWAHILALRALQDPKKAPSVQGQFYYISDDTPHQSYDDLNYNLSKEWGFSLDSRMSLPISLEYWLAFLLEIVSFLLSPIYKYQPPFNRHMVTLSNSIFTFSYKKAQRDLGYKPLFSWEEAKQKTTEWIGSLVKQHKETLKTKTH</sequence>
<comment type="function">
    <text evidence="1">3-beta-HSD is a bifunctional enzyme, that catalyzes the oxidative conversion of Delta(5)-ene-3-beta-hydroxy steroid, and the oxidative conversion of ketosteroids. The 3-beta-HSD enzymatic system plays a crucial role in the biosynthesis of all classes of hormonal steroids (By similarity).</text>
</comment>
<comment type="catalytic activity">
    <reaction>
        <text>a 3beta-hydroxy-Delta(5)-steroid + NAD(+) = a 3-oxo-Delta(5)-steroid + NADH + H(+)</text>
        <dbReference type="Rhea" id="RHEA:24076"/>
        <dbReference type="ChEBI" id="CHEBI:1722"/>
        <dbReference type="ChEBI" id="CHEBI:15378"/>
        <dbReference type="ChEBI" id="CHEBI:47907"/>
        <dbReference type="ChEBI" id="CHEBI:57540"/>
        <dbReference type="ChEBI" id="CHEBI:57945"/>
        <dbReference type="EC" id="1.1.1.145"/>
    </reaction>
</comment>
<comment type="catalytic activity">
    <reaction>
        <text>a 3-oxo-Delta(5)-steroid = a 3-oxo-Delta(4)-steroid</text>
        <dbReference type="Rhea" id="RHEA:14709"/>
        <dbReference type="ChEBI" id="CHEBI:47907"/>
        <dbReference type="ChEBI" id="CHEBI:47909"/>
        <dbReference type="EC" id="5.3.3.1"/>
    </reaction>
</comment>
<comment type="pathway">
    <text>Lipid metabolism; steroid biosynthesis.</text>
</comment>
<comment type="subcellular location">
    <subcellularLocation>
        <location evidence="1">Endoplasmic reticulum membrane</location>
        <topology evidence="1">Single-pass membrane protein</topology>
    </subcellularLocation>
    <subcellularLocation>
        <location evidence="1">Mitochondrion membrane</location>
        <topology evidence="1">Single-pass membrane protein</topology>
    </subcellularLocation>
</comment>
<comment type="similarity">
    <text evidence="3">Belongs to the 3-beta-HSD family.</text>
</comment>
<protein>
    <recommendedName>
        <fullName>3 beta-hydroxysteroid dehydrogenase/Delta 5--&gt;4-isomerase</fullName>
        <shortName>3-beta-HSD</shortName>
    </recommendedName>
    <domain>
        <recommendedName>
            <fullName>3-beta-hydroxy-Delta(5)-steroid dehydrogenase</fullName>
            <ecNumber>1.1.1.145</ecNumber>
        </recommendedName>
        <alternativeName>
            <fullName>3-beta-hydroxy-5-ene steroid dehydrogenase</fullName>
        </alternativeName>
        <alternativeName>
            <fullName>Progesterone reductase</fullName>
        </alternativeName>
    </domain>
    <domain>
        <recommendedName>
            <fullName>Steroid Delta-isomerase</fullName>
            <ecNumber>5.3.3.1</ecNumber>
        </recommendedName>
        <alternativeName>
            <fullName>Delta-5-3-ketosteroid isomerase</fullName>
        </alternativeName>
    </domain>
</protein>
<keyword id="KW-0256">Endoplasmic reticulum</keyword>
<keyword id="KW-0413">Isomerase</keyword>
<keyword id="KW-0472">Membrane</keyword>
<keyword id="KW-0496">Mitochondrion</keyword>
<keyword id="KW-0511">Multifunctional enzyme</keyword>
<keyword id="KW-0520">NAD</keyword>
<keyword id="KW-0560">Oxidoreductase</keyword>
<keyword id="KW-1185">Reference proteome</keyword>
<keyword id="KW-0755">Steroidogenesis</keyword>
<keyword id="KW-0812">Transmembrane</keyword>
<keyword id="KW-1133">Transmembrane helix</keyword>
<proteinExistence type="evidence at transcript level"/>
<feature type="chain" id="PRO_0000087772" description="3 beta-hydroxysteroid dehydrogenase/Delta 5--&gt;4-isomerase">
    <location>
        <begin position="1"/>
        <end position="373"/>
    </location>
</feature>
<feature type="transmembrane region" description="Helical" evidence="2">
    <location>
        <begin position="288"/>
        <end position="308"/>
    </location>
</feature>
<feature type="active site" description="Proton acceptor" evidence="1">
    <location>
        <position position="155"/>
    </location>
</feature>
<feature type="binding site" evidence="1">
    <location>
        <position position="159"/>
    </location>
    <ligand>
        <name>NAD(+)</name>
        <dbReference type="ChEBI" id="CHEBI:57540"/>
    </ligand>
</feature>
<reference key="1">
    <citation type="submission" date="2004-09" db="EMBL/GenBank/DDBJ databases">
        <title>Expression of 3-beta-hydroxysteroid dehydrogenase in canine corpus luteum during dioestrus.</title>
        <authorList>
            <person name="Kowalewski M.P."/>
            <person name="Taubert A."/>
            <person name="Hoffmann B."/>
        </authorList>
    </citation>
    <scope>NUCLEOTIDE SEQUENCE [MRNA]</scope>
    <source>
        <tissue>Corpus luteum</tissue>
    </source>
</reference>
<dbReference type="EC" id="1.1.1.145"/>
<dbReference type="EC" id="5.3.3.1"/>
<dbReference type="EMBL" id="AY739720">
    <property type="protein sequence ID" value="AAW31741.1"/>
    <property type="molecule type" value="mRNA"/>
</dbReference>
<dbReference type="RefSeq" id="NP_001010954.1">
    <property type="nucleotide sequence ID" value="NM_001010954.2"/>
</dbReference>
<dbReference type="SMR" id="Q5IFP1"/>
<dbReference type="FunCoup" id="Q5IFP1">
    <property type="interactions" value="3"/>
</dbReference>
<dbReference type="STRING" id="9615.ENSCAFP00000014770"/>
<dbReference type="PaxDb" id="9612-ENSCAFP00000014770"/>
<dbReference type="Ensembl" id="ENSCAFT00000015969.5">
    <property type="protein sequence ID" value="ENSCAFP00000014770.4"/>
    <property type="gene ID" value="ENSCAFG00000010039.5"/>
</dbReference>
<dbReference type="Ensembl" id="ENSCAFT00030012465.1">
    <property type="protein sequence ID" value="ENSCAFP00030010903.1"/>
    <property type="gene ID" value="ENSCAFG00030006775.1"/>
</dbReference>
<dbReference type="Ensembl" id="ENSCAFT00040026459.1">
    <property type="protein sequence ID" value="ENSCAFP00040022992.1"/>
    <property type="gene ID" value="ENSCAFG00040014327.1"/>
</dbReference>
<dbReference type="Ensembl" id="ENSCAFT00845011264.1">
    <property type="protein sequence ID" value="ENSCAFP00845008786.1"/>
    <property type="gene ID" value="ENSCAFG00845006351.1"/>
</dbReference>
<dbReference type="GeneID" id="483146"/>
<dbReference type="KEGG" id="cfa:483146"/>
<dbReference type="CTD" id="3284"/>
<dbReference type="VEuPathDB" id="HostDB:ENSCAFG00845006351"/>
<dbReference type="eggNOG" id="KOG1430">
    <property type="taxonomic scope" value="Eukaryota"/>
</dbReference>
<dbReference type="GeneTree" id="ENSGT00940000155444"/>
<dbReference type="InParanoid" id="Q5IFP1"/>
<dbReference type="OrthoDB" id="1925334at2759"/>
<dbReference type="Reactome" id="R-CFA-193048">
    <property type="pathway name" value="Androgen biosynthesis"/>
</dbReference>
<dbReference type="Reactome" id="R-CFA-193993">
    <property type="pathway name" value="Mineralocorticoid biosynthesis"/>
</dbReference>
<dbReference type="Reactome" id="R-CFA-194002">
    <property type="pathway name" value="Glucocorticoid biosynthesis"/>
</dbReference>
<dbReference type="UniPathway" id="UPA00062"/>
<dbReference type="Proteomes" id="UP000002254">
    <property type="component" value="Chromosome 17"/>
</dbReference>
<dbReference type="Proteomes" id="UP000694429">
    <property type="component" value="Chromosome 17"/>
</dbReference>
<dbReference type="Proteomes" id="UP000694542">
    <property type="component" value="Chromosome 17"/>
</dbReference>
<dbReference type="Proteomes" id="UP000805418">
    <property type="component" value="Chromosome 17"/>
</dbReference>
<dbReference type="Bgee" id="ENSCAFG00000010039">
    <property type="expression patterns" value="Expressed in adrenal cortex and 25 other cell types or tissues"/>
</dbReference>
<dbReference type="GO" id="GO:0005737">
    <property type="term" value="C:cytoplasm"/>
    <property type="evidence" value="ECO:0000318"/>
    <property type="project" value="GO_Central"/>
</dbReference>
<dbReference type="GO" id="GO:0005789">
    <property type="term" value="C:endoplasmic reticulum membrane"/>
    <property type="evidence" value="ECO:0007669"/>
    <property type="project" value="UniProtKB-SubCell"/>
</dbReference>
<dbReference type="GO" id="GO:0043231">
    <property type="term" value="C:intracellular membrane-bounded organelle"/>
    <property type="evidence" value="ECO:0000318"/>
    <property type="project" value="GO_Central"/>
</dbReference>
<dbReference type="GO" id="GO:0031966">
    <property type="term" value="C:mitochondrial membrane"/>
    <property type="evidence" value="ECO:0007669"/>
    <property type="project" value="UniProtKB-SubCell"/>
</dbReference>
<dbReference type="GO" id="GO:0003854">
    <property type="term" value="F:3-beta-hydroxy-Delta5-steroid dehydrogenase (NAD+) activity"/>
    <property type="evidence" value="ECO:0007669"/>
    <property type="project" value="UniProtKB-EC"/>
</dbReference>
<dbReference type="GO" id="GO:0016616">
    <property type="term" value="F:oxidoreductase activity, acting on the CH-OH group of donors, NAD or NADP as acceptor"/>
    <property type="evidence" value="ECO:0000318"/>
    <property type="project" value="GO_Central"/>
</dbReference>
<dbReference type="GO" id="GO:0004769">
    <property type="term" value="F:steroid Delta-isomerase activity"/>
    <property type="evidence" value="ECO:0007669"/>
    <property type="project" value="UniProtKB-EC"/>
</dbReference>
<dbReference type="GO" id="GO:0008207">
    <property type="term" value="P:C21-steroid hormone metabolic process"/>
    <property type="evidence" value="ECO:0000318"/>
    <property type="project" value="GO_Central"/>
</dbReference>
<dbReference type="GO" id="GO:0006694">
    <property type="term" value="P:steroid biosynthetic process"/>
    <property type="evidence" value="ECO:0000318"/>
    <property type="project" value="GO_Central"/>
</dbReference>
<dbReference type="CDD" id="cd09811">
    <property type="entry name" value="3b-HSD_HSDB1_like_SDR_e"/>
    <property type="match status" value="1"/>
</dbReference>
<dbReference type="FunFam" id="3.40.50.720:FF:000220">
    <property type="entry name" value="3 beta-hydroxysteroid dehydrogenase/Delta 5--&gt;4-isomerase type 1"/>
    <property type="match status" value="1"/>
</dbReference>
<dbReference type="Gene3D" id="3.40.50.720">
    <property type="entry name" value="NAD(P)-binding Rossmann-like Domain"/>
    <property type="match status" value="1"/>
</dbReference>
<dbReference type="InterPro" id="IPR002225">
    <property type="entry name" value="3Beta_OHSteriod_DH/Estase"/>
</dbReference>
<dbReference type="InterPro" id="IPR050177">
    <property type="entry name" value="Lipid_A_modif_metabolic_enz"/>
</dbReference>
<dbReference type="InterPro" id="IPR036291">
    <property type="entry name" value="NAD(P)-bd_dom_sf"/>
</dbReference>
<dbReference type="PANTHER" id="PTHR43245">
    <property type="entry name" value="BIFUNCTIONAL POLYMYXIN RESISTANCE PROTEIN ARNA"/>
    <property type="match status" value="1"/>
</dbReference>
<dbReference type="PANTHER" id="PTHR43245:SF51">
    <property type="entry name" value="SHORT CHAIN DEHYDROGENASE_REDUCTASE FAMILY 42E, MEMBER 2"/>
    <property type="match status" value="1"/>
</dbReference>
<dbReference type="Pfam" id="PF01073">
    <property type="entry name" value="3Beta_HSD"/>
    <property type="match status" value="1"/>
</dbReference>
<dbReference type="SUPFAM" id="SSF51735">
    <property type="entry name" value="NAD(P)-binding Rossmann-fold domains"/>
    <property type="match status" value="1"/>
</dbReference>
<accession>Q5IFP1</accession>
<organism>
    <name type="scientific">Canis lupus familiaris</name>
    <name type="common">Dog</name>
    <name type="synonym">Canis familiaris</name>
    <dbReference type="NCBI Taxonomy" id="9615"/>
    <lineage>
        <taxon>Eukaryota</taxon>
        <taxon>Metazoa</taxon>
        <taxon>Chordata</taxon>
        <taxon>Craniata</taxon>
        <taxon>Vertebrata</taxon>
        <taxon>Euteleostomi</taxon>
        <taxon>Mammalia</taxon>
        <taxon>Eutheria</taxon>
        <taxon>Laurasiatheria</taxon>
        <taxon>Carnivora</taxon>
        <taxon>Caniformia</taxon>
        <taxon>Canidae</taxon>
        <taxon>Canis</taxon>
    </lineage>
</organism>
<evidence type="ECO:0000250" key="1"/>
<evidence type="ECO:0000255" key="2"/>
<evidence type="ECO:0000305" key="3"/>